<name>RL38_ARATH</name>
<protein>
    <recommendedName>
        <fullName evidence="1">Large ribosomal subunit protein eL38z/eL38y</fullName>
    </recommendedName>
    <alternativeName>
        <fullName>60S ribosomal protein L38</fullName>
    </alternativeName>
</protein>
<organism>
    <name type="scientific">Arabidopsis thaliana</name>
    <name type="common">Mouse-ear cress</name>
    <dbReference type="NCBI Taxonomy" id="3702"/>
    <lineage>
        <taxon>Eukaryota</taxon>
        <taxon>Viridiplantae</taxon>
        <taxon>Streptophyta</taxon>
        <taxon>Embryophyta</taxon>
        <taxon>Tracheophyta</taxon>
        <taxon>Spermatophyta</taxon>
        <taxon>Magnoliopsida</taxon>
        <taxon>eudicotyledons</taxon>
        <taxon>Gunneridae</taxon>
        <taxon>Pentapetalae</taxon>
        <taxon>rosids</taxon>
        <taxon>malvids</taxon>
        <taxon>Brassicales</taxon>
        <taxon>Brassicaceae</taxon>
        <taxon>Camelineae</taxon>
        <taxon>Arabidopsis</taxon>
    </lineage>
</organism>
<evidence type="ECO:0000303" key="1">
    <source>
    </source>
</evidence>
<evidence type="ECO:0000305" key="2"/>
<feature type="chain" id="PRO_0000215440" description="Large ribosomal subunit protein eL38z/eL38y">
    <location>
        <begin position="1"/>
        <end position="69"/>
    </location>
</feature>
<comment type="similarity">
    <text evidence="2">Belongs to the eukaryotic ribosomal protein eL38 family.</text>
</comment>
<gene>
    <name type="primary">RPL38A</name>
    <name type="synonym">RPL38</name>
    <name type="ordered locus">At2g43460</name>
    <name type="ORF">T1O24.20</name>
</gene>
<gene>
    <name type="primary">RPL38B</name>
    <name type="ordered locus">At3g59540</name>
    <name type="ORF">T16L24.90</name>
</gene>
<accession>O22860</accession>
<accession>Q1WW90</accession>
<reference key="1">
    <citation type="journal article" date="1999" name="Nature">
        <title>Sequence and analysis of chromosome 2 of the plant Arabidopsis thaliana.</title>
        <authorList>
            <person name="Lin X."/>
            <person name="Kaul S."/>
            <person name="Rounsley S.D."/>
            <person name="Shea T.P."/>
            <person name="Benito M.-I."/>
            <person name="Town C.D."/>
            <person name="Fujii C.Y."/>
            <person name="Mason T.M."/>
            <person name="Bowman C.L."/>
            <person name="Barnstead M.E."/>
            <person name="Feldblyum T.V."/>
            <person name="Buell C.R."/>
            <person name="Ketchum K.A."/>
            <person name="Lee J.J."/>
            <person name="Ronning C.M."/>
            <person name="Koo H.L."/>
            <person name="Moffat K.S."/>
            <person name="Cronin L.A."/>
            <person name="Shen M."/>
            <person name="Pai G."/>
            <person name="Van Aken S."/>
            <person name="Umayam L."/>
            <person name="Tallon L.J."/>
            <person name="Gill J.E."/>
            <person name="Adams M.D."/>
            <person name="Carrera A.J."/>
            <person name="Creasy T.H."/>
            <person name="Goodman H.M."/>
            <person name="Somerville C.R."/>
            <person name="Copenhaver G.P."/>
            <person name="Preuss D."/>
            <person name="Nierman W.C."/>
            <person name="White O."/>
            <person name="Eisen J.A."/>
            <person name="Salzberg S.L."/>
            <person name="Fraser C.M."/>
            <person name="Venter J.C."/>
        </authorList>
    </citation>
    <scope>NUCLEOTIDE SEQUENCE [LARGE SCALE GENOMIC DNA] (RPL38A)</scope>
    <source>
        <strain>cv. Columbia</strain>
    </source>
</reference>
<reference key="2">
    <citation type="journal article" date="2000" name="Nature">
        <title>Sequence and analysis of chromosome 3 of the plant Arabidopsis thaliana.</title>
        <authorList>
            <person name="Salanoubat M."/>
            <person name="Lemcke K."/>
            <person name="Rieger M."/>
            <person name="Ansorge W."/>
            <person name="Unseld M."/>
            <person name="Fartmann B."/>
            <person name="Valle G."/>
            <person name="Bloecker H."/>
            <person name="Perez-Alonso M."/>
            <person name="Obermaier B."/>
            <person name="Delseny M."/>
            <person name="Boutry M."/>
            <person name="Grivell L.A."/>
            <person name="Mache R."/>
            <person name="Puigdomenech P."/>
            <person name="De Simone V."/>
            <person name="Choisne N."/>
            <person name="Artiguenave F."/>
            <person name="Robert C."/>
            <person name="Brottier P."/>
            <person name="Wincker P."/>
            <person name="Cattolico L."/>
            <person name="Weissenbach J."/>
            <person name="Saurin W."/>
            <person name="Quetier F."/>
            <person name="Schaefer M."/>
            <person name="Mueller-Auer S."/>
            <person name="Gabel C."/>
            <person name="Fuchs M."/>
            <person name="Benes V."/>
            <person name="Wurmbach E."/>
            <person name="Drzonek H."/>
            <person name="Erfle H."/>
            <person name="Jordan N."/>
            <person name="Bangert S."/>
            <person name="Wiedelmann R."/>
            <person name="Kranz H."/>
            <person name="Voss H."/>
            <person name="Holland R."/>
            <person name="Brandt P."/>
            <person name="Nyakatura G."/>
            <person name="Vezzi A."/>
            <person name="D'Angelo M."/>
            <person name="Pallavicini A."/>
            <person name="Toppo S."/>
            <person name="Simionati B."/>
            <person name="Conrad A."/>
            <person name="Hornischer K."/>
            <person name="Kauer G."/>
            <person name="Loehnert T.-H."/>
            <person name="Nordsiek G."/>
            <person name="Reichelt J."/>
            <person name="Scharfe M."/>
            <person name="Schoen O."/>
            <person name="Bargues M."/>
            <person name="Terol J."/>
            <person name="Climent J."/>
            <person name="Navarro P."/>
            <person name="Collado C."/>
            <person name="Perez-Perez A."/>
            <person name="Ottenwaelder B."/>
            <person name="Duchemin D."/>
            <person name="Cooke R."/>
            <person name="Laudie M."/>
            <person name="Berger-Llauro C."/>
            <person name="Purnelle B."/>
            <person name="Masuy D."/>
            <person name="de Haan M."/>
            <person name="Maarse A.C."/>
            <person name="Alcaraz J.-P."/>
            <person name="Cottet A."/>
            <person name="Casacuberta E."/>
            <person name="Monfort A."/>
            <person name="Argiriou A."/>
            <person name="Flores M."/>
            <person name="Liguori R."/>
            <person name="Vitale D."/>
            <person name="Mannhaupt G."/>
            <person name="Haase D."/>
            <person name="Schoof H."/>
            <person name="Rudd S."/>
            <person name="Zaccaria P."/>
            <person name="Mewes H.-W."/>
            <person name="Mayer K.F.X."/>
            <person name="Kaul S."/>
            <person name="Town C.D."/>
            <person name="Koo H.L."/>
            <person name="Tallon L.J."/>
            <person name="Jenkins J."/>
            <person name="Rooney T."/>
            <person name="Rizzo M."/>
            <person name="Walts A."/>
            <person name="Utterback T."/>
            <person name="Fujii C.Y."/>
            <person name="Shea T.P."/>
            <person name="Creasy T.H."/>
            <person name="Haas B."/>
            <person name="Maiti R."/>
            <person name="Wu D."/>
            <person name="Peterson J."/>
            <person name="Van Aken S."/>
            <person name="Pai G."/>
            <person name="Militscher J."/>
            <person name="Sellers P."/>
            <person name="Gill J.E."/>
            <person name="Feldblyum T.V."/>
            <person name="Preuss D."/>
            <person name="Lin X."/>
            <person name="Nierman W.C."/>
            <person name="Salzberg S.L."/>
            <person name="White O."/>
            <person name="Venter J.C."/>
            <person name="Fraser C.M."/>
            <person name="Kaneko T."/>
            <person name="Nakamura Y."/>
            <person name="Sato S."/>
            <person name="Kato T."/>
            <person name="Asamizu E."/>
            <person name="Sasamoto S."/>
            <person name="Kimura T."/>
            <person name="Idesawa K."/>
            <person name="Kawashima K."/>
            <person name="Kishida Y."/>
            <person name="Kiyokawa C."/>
            <person name="Kohara M."/>
            <person name="Matsumoto M."/>
            <person name="Matsuno A."/>
            <person name="Muraki A."/>
            <person name="Nakayama S."/>
            <person name="Nakazaki N."/>
            <person name="Shinpo S."/>
            <person name="Takeuchi C."/>
            <person name="Wada T."/>
            <person name="Watanabe A."/>
            <person name="Yamada M."/>
            <person name="Yasuda M."/>
            <person name="Tabata S."/>
        </authorList>
    </citation>
    <scope>NUCLEOTIDE SEQUENCE [LARGE SCALE GENOMIC DNA] (RPL38B)</scope>
    <source>
        <strain>cv. Columbia</strain>
    </source>
</reference>
<reference key="3">
    <citation type="journal article" date="2017" name="Plant J.">
        <title>Araport11: a complete reannotation of the Arabidopsis thaliana reference genome.</title>
        <authorList>
            <person name="Cheng C.Y."/>
            <person name="Krishnakumar V."/>
            <person name="Chan A.P."/>
            <person name="Thibaud-Nissen F."/>
            <person name="Schobel S."/>
            <person name="Town C.D."/>
        </authorList>
    </citation>
    <scope>GENOME REANNOTATION</scope>
    <source>
        <strain>cv. Columbia</strain>
    </source>
</reference>
<reference key="4">
    <citation type="journal article" date="2003" name="Science">
        <title>Empirical analysis of transcriptional activity in the Arabidopsis genome.</title>
        <authorList>
            <person name="Yamada K."/>
            <person name="Lim J."/>
            <person name="Dale J.M."/>
            <person name="Chen H."/>
            <person name="Shinn P."/>
            <person name="Palm C.J."/>
            <person name="Southwick A.M."/>
            <person name="Wu H.C."/>
            <person name="Kim C.J."/>
            <person name="Nguyen M."/>
            <person name="Pham P.K."/>
            <person name="Cheuk R.F."/>
            <person name="Karlin-Newmann G."/>
            <person name="Liu S.X."/>
            <person name="Lam B."/>
            <person name="Sakano H."/>
            <person name="Wu T."/>
            <person name="Yu G."/>
            <person name="Miranda M."/>
            <person name="Quach H.L."/>
            <person name="Tripp M."/>
            <person name="Chang C.H."/>
            <person name="Lee J.M."/>
            <person name="Toriumi M.J."/>
            <person name="Chan M.M."/>
            <person name="Tang C.C."/>
            <person name="Onodera C.S."/>
            <person name="Deng J.M."/>
            <person name="Akiyama K."/>
            <person name="Ansari Y."/>
            <person name="Arakawa T."/>
            <person name="Banh J."/>
            <person name="Banno F."/>
            <person name="Bowser L."/>
            <person name="Brooks S.Y."/>
            <person name="Carninci P."/>
            <person name="Chao Q."/>
            <person name="Choy N."/>
            <person name="Enju A."/>
            <person name="Goldsmith A.D."/>
            <person name="Gurjal M."/>
            <person name="Hansen N.F."/>
            <person name="Hayashizaki Y."/>
            <person name="Johnson-Hopson C."/>
            <person name="Hsuan V.W."/>
            <person name="Iida K."/>
            <person name="Karnes M."/>
            <person name="Khan S."/>
            <person name="Koesema E."/>
            <person name="Ishida J."/>
            <person name="Jiang P.X."/>
            <person name="Jones T."/>
            <person name="Kawai J."/>
            <person name="Kamiya A."/>
            <person name="Meyers C."/>
            <person name="Nakajima M."/>
            <person name="Narusaka M."/>
            <person name="Seki M."/>
            <person name="Sakurai T."/>
            <person name="Satou M."/>
            <person name="Tamse R."/>
            <person name="Vaysberg M."/>
            <person name="Wallender E.K."/>
            <person name="Wong C."/>
            <person name="Yamamura Y."/>
            <person name="Yuan S."/>
            <person name="Shinozaki K."/>
            <person name="Davis R.W."/>
            <person name="Theologis A."/>
            <person name="Ecker J.R."/>
        </authorList>
    </citation>
    <scope>NUCLEOTIDE SEQUENCE [LARGE SCALE MRNA] (RPL38B)</scope>
    <source>
        <strain>cv. Columbia</strain>
    </source>
</reference>
<reference key="5">
    <citation type="submission" date="2006-04" db="EMBL/GenBank/DDBJ databases">
        <title>Arabidopsis ORF clones.</title>
        <authorList>
            <person name="Shinn P."/>
            <person name="Chen H."/>
            <person name="Kim C.J."/>
            <person name="Ecker J.R."/>
        </authorList>
    </citation>
    <scope>NUCLEOTIDE SEQUENCE [LARGE SCALE MRNA] (RPL38A)</scope>
    <source>
        <strain>cv. Columbia</strain>
    </source>
</reference>
<reference key="6">
    <citation type="submission" date="2002-03" db="EMBL/GenBank/DDBJ databases">
        <title>Full-length cDNA from Arabidopsis thaliana.</title>
        <authorList>
            <person name="Brover V.V."/>
            <person name="Troukhan M.E."/>
            <person name="Alexandrov N.A."/>
            <person name="Lu Y.-P."/>
            <person name="Flavell R.B."/>
            <person name="Feldmann K.A."/>
        </authorList>
    </citation>
    <scope>NUCLEOTIDE SEQUENCE [LARGE SCALE MRNA] (RPL38A)</scope>
</reference>
<reference key="7">
    <citation type="journal article" date="2001" name="Plant Physiol.">
        <title>The organization of cytoplasmic ribosomal protein genes in the Arabidopsis genome.</title>
        <authorList>
            <person name="Barakat A."/>
            <person name="Szick-Miranda K."/>
            <person name="Chang I.-F."/>
            <person name="Guyot R."/>
            <person name="Blanc G."/>
            <person name="Cooke R."/>
            <person name="Delseny M."/>
            <person name="Bailey-Serres J."/>
        </authorList>
    </citation>
    <scope>GENE FAMILY ORGANIZATION</scope>
    <scope>NOMENCLATURE</scope>
</reference>
<reference key="8">
    <citation type="journal article" date="2023" name="Plant Cell">
        <title>An updated nomenclature for plant ribosomal protein genes.</title>
        <authorList>
            <person name="Scarpin M.R."/>
            <person name="Busche M."/>
            <person name="Martinez R.E."/>
            <person name="Harper L.C."/>
            <person name="Reiser L."/>
            <person name="Szakonyi D."/>
            <person name="Merchante C."/>
            <person name="Lan T."/>
            <person name="Xiong W."/>
            <person name="Mo B."/>
            <person name="Tang G."/>
            <person name="Chen X."/>
            <person name="Bailey-Serres J."/>
            <person name="Browning K.S."/>
            <person name="Brunkard J.O."/>
        </authorList>
    </citation>
    <scope>NOMENCLATURE</scope>
</reference>
<keyword id="KW-1185">Reference proteome</keyword>
<keyword id="KW-0687">Ribonucleoprotein</keyword>
<keyword id="KW-0689">Ribosomal protein</keyword>
<sequence>MPKQIHEIKDFLLTARRKDARSVKIKRSKDIVKFKVRCSRYLYTLCVFDQEKADKLKQSLPPGLSVQDL</sequence>
<dbReference type="EMBL" id="AC002335">
    <property type="protein sequence ID" value="AAB64338.1"/>
    <property type="molecule type" value="Genomic_DNA"/>
</dbReference>
<dbReference type="EMBL" id="AL138659">
    <property type="protein sequence ID" value="CAB75451.1"/>
    <property type="molecule type" value="Genomic_DNA"/>
</dbReference>
<dbReference type="EMBL" id="CP002685">
    <property type="protein sequence ID" value="AEC10272.1"/>
    <property type="molecule type" value="Genomic_DNA"/>
</dbReference>
<dbReference type="EMBL" id="CP002686">
    <property type="protein sequence ID" value="AEE79938.1"/>
    <property type="molecule type" value="Genomic_DNA"/>
</dbReference>
<dbReference type="EMBL" id="AF361841">
    <property type="protein sequence ID" value="AAK32853.1"/>
    <property type="molecule type" value="mRNA"/>
</dbReference>
<dbReference type="EMBL" id="BT000853">
    <property type="protein sequence ID" value="AAN38690.1"/>
    <property type="molecule type" value="mRNA"/>
</dbReference>
<dbReference type="EMBL" id="BT025016">
    <property type="protein sequence ID" value="ABE02391.1"/>
    <property type="molecule type" value="mRNA"/>
</dbReference>
<dbReference type="EMBL" id="AY088307">
    <property type="protein sequence ID" value="AAM65846.1"/>
    <property type="molecule type" value="mRNA"/>
</dbReference>
<dbReference type="PIR" id="D84866">
    <property type="entry name" value="D84866"/>
</dbReference>
<dbReference type="PIR" id="T49295">
    <property type="entry name" value="T49295"/>
</dbReference>
<dbReference type="RefSeq" id="NP_181874.1">
    <property type="nucleotide sequence ID" value="NM_129907.3"/>
</dbReference>
<dbReference type="RefSeq" id="NP_191513.1">
    <property type="nucleotide sequence ID" value="NM_115816.6"/>
</dbReference>
<dbReference type="SMR" id="O22860"/>
<dbReference type="BioGRID" id="10438">
    <property type="interactions" value="22"/>
</dbReference>
<dbReference type="BioGRID" id="4283">
    <property type="interactions" value="25"/>
</dbReference>
<dbReference type="FunCoup" id="O22860">
    <property type="interactions" value="3171"/>
</dbReference>
<dbReference type="IntAct" id="O22860">
    <property type="interactions" value="1"/>
</dbReference>
<dbReference type="STRING" id="3702.O22860"/>
<dbReference type="PaxDb" id="3702-AT2G43460.1"/>
<dbReference type="ProteomicsDB" id="226845"/>
<dbReference type="EnsemblPlants" id="AT2G43460.1">
    <property type="protein sequence ID" value="AT2G43460.1"/>
    <property type="gene ID" value="AT2G43460"/>
</dbReference>
<dbReference type="EnsemblPlants" id="AT3G59540.1">
    <property type="protein sequence ID" value="AT3G59540.1"/>
    <property type="gene ID" value="AT3G59540"/>
</dbReference>
<dbReference type="GeneID" id="818947"/>
<dbReference type="GeneID" id="825123"/>
<dbReference type="Gramene" id="AT2G43460.1">
    <property type="protein sequence ID" value="AT2G43460.1"/>
    <property type="gene ID" value="AT2G43460"/>
</dbReference>
<dbReference type="Gramene" id="AT3G59540.1">
    <property type="protein sequence ID" value="AT3G59540.1"/>
    <property type="gene ID" value="AT3G59540"/>
</dbReference>
<dbReference type="KEGG" id="ath:AT2G43460"/>
<dbReference type="KEGG" id="ath:AT3G59540"/>
<dbReference type="Araport" id="AT2G43460"/>
<dbReference type="Araport" id="AT3G59540"/>
<dbReference type="TAIR" id="AT2G43460"/>
<dbReference type="TAIR" id="AT3G59540"/>
<dbReference type="eggNOG" id="KOG3499">
    <property type="taxonomic scope" value="Eukaryota"/>
</dbReference>
<dbReference type="HOGENOM" id="CLU_152057_2_0_1"/>
<dbReference type="InParanoid" id="O22860"/>
<dbReference type="OMA" id="MPKQIHD"/>
<dbReference type="OrthoDB" id="1045117at2759"/>
<dbReference type="PhylomeDB" id="O22860"/>
<dbReference type="CD-CODE" id="4299E36E">
    <property type="entry name" value="Nucleolus"/>
</dbReference>
<dbReference type="PRO" id="PR:O22860"/>
<dbReference type="Proteomes" id="UP000006548">
    <property type="component" value="Chromosome 2"/>
</dbReference>
<dbReference type="Proteomes" id="UP000006548">
    <property type="component" value="Chromosome 3"/>
</dbReference>
<dbReference type="ExpressionAtlas" id="O22860">
    <property type="expression patterns" value="baseline and differential"/>
</dbReference>
<dbReference type="GO" id="GO:0005829">
    <property type="term" value="C:cytosol"/>
    <property type="evidence" value="ECO:0007005"/>
    <property type="project" value="TAIR"/>
</dbReference>
<dbReference type="GO" id="GO:0022625">
    <property type="term" value="C:cytosolic large ribosomal subunit"/>
    <property type="evidence" value="ECO:0007005"/>
    <property type="project" value="TAIR"/>
</dbReference>
<dbReference type="GO" id="GO:0022626">
    <property type="term" value="C:cytosolic ribosome"/>
    <property type="evidence" value="ECO:0007005"/>
    <property type="project" value="TAIR"/>
</dbReference>
<dbReference type="GO" id="GO:0003735">
    <property type="term" value="F:structural constituent of ribosome"/>
    <property type="evidence" value="ECO:0000314"/>
    <property type="project" value="CAFA"/>
</dbReference>
<dbReference type="GO" id="GO:0006412">
    <property type="term" value="P:translation"/>
    <property type="evidence" value="ECO:0007669"/>
    <property type="project" value="InterPro"/>
</dbReference>
<dbReference type="FunFam" id="3.30.720.90:FF:000001">
    <property type="entry name" value="60S ribosomal protein L38"/>
    <property type="match status" value="1"/>
</dbReference>
<dbReference type="Gene3D" id="3.30.720.90">
    <property type="match status" value="1"/>
</dbReference>
<dbReference type="InterPro" id="IPR002675">
    <property type="entry name" value="Ribosomal_eL38"/>
</dbReference>
<dbReference type="InterPro" id="IPR038464">
    <property type="entry name" value="Ribosomal_eL38_sf"/>
</dbReference>
<dbReference type="PANTHER" id="PTHR10965">
    <property type="entry name" value="60S RIBOSOMAL PROTEIN L38"/>
    <property type="match status" value="1"/>
</dbReference>
<dbReference type="PANTHER" id="PTHR10965:SF0">
    <property type="entry name" value="LARGE RIBOSOMAL SUBUNIT PROTEIN EL38"/>
    <property type="match status" value="1"/>
</dbReference>
<dbReference type="Pfam" id="PF01781">
    <property type="entry name" value="Ribosomal_L38e"/>
    <property type="match status" value="1"/>
</dbReference>
<proteinExistence type="inferred from homology"/>